<feature type="chain" id="PRO_0000460457" description="3-ketodihydrosphingosine reductase ksrA">
    <location>
        <begin position="1"/>
        <end position="367"/>
    </location>
</feature>
<feature type="transmembrane region" description="Helical" evidence="6">
    <location>
        <begin position="12"/>
        <end position="32"/>
    </location>
</feature>
<feature type="transmembrane region" description="Helical" evidence="6">
    <location>
        <begin position="193"/>
        <end position="213"/>
    </location>
</feature>
<feature type="short sequence motif" description="GXSXG" evidence="5">
    <location>
        <begin position="53"/>
        <end position="57"/>
    </location>
</feature>
<feature type="active site" description="Proton acceptor" evidence="2">
    <location>
        <position position="211"/>
    </location>
</feature>
<feature type="active site" description="Lowers pKa of active site Tyr" evidence="2">
    <location>
        <position position="215"/>
    </location>
</feature>
<feature type="binding site" evidence="3">
    <location>
        <position position="53"/>
    </location>
    <ligand>
        <name>NADPH</name>
        <dbReference type="ChEBI" id="CHEBI:57783"/>
    </ligand>
</feature>
<feature type="binding site" evidence="3">
    <location>
        <position position="55"/>
    </location>
    <ligand>
        <name>NADPH</name>
        <dbReference type="ChEBI" id="CHEBI:57783"/>
    </ligand>
</feature>
<feature type="binding site" evidence="3">
    <location>
        <position position="57"/>
    </location>
    <ligand>
        <name>NADPH</name>
        <dbReference type="ChEBI" id="CHEBI:57783"/>
    </ligand>
</feature>
<feature type="binding site" evidence="3">
    <location>
        <position position="78"/>
    </location>
    <ligand>
        <name>NADPH</name>
        <dbReference type="ChEBI" id="CHEBI:57783"/>
    </ligand>
</feature>
<feature type="binding site" evidence="3">
    <location>
        <position position="82"/>
    </location>
    <ligand>
        <name>NADPH</name>
        <dbReference type="ChEBI" id="CHEBI:57783"/>
    </ligand>
</feature>
<feature type="binding site" evidence="3">
    <location>
        <position position="108"/>
    </location>
    <ligand>
        <name>NADPH</name>
        <dbReference type="ChEBI" id="CHEBI:57783"/>
    </ligand>
</feature>
<feature type="binding site" evidence="3">
    <location>
        <position position="109"/>
    </location>
    <ligand>
        <name>NADPH</name>
        <dbReference type="ChEBI" id="CHEBI:57783"/>
    </ligand>
</feature>
<feature type="binding site" evidence="2">
    <location>
        <position position="211"/>
    </location>
    <ligand>
        <name>NADP(+)</name>
        <dbReference type="ChEBI" id="CHEBI:58349"/>
    </ligand>
</feature>
<feature type="binding site" evidence="2">
    <location>
        <position position="215"/>
    </location>
    <ligand>
        <name>NADP(+)</name>
        <dbReference type="ChEBI" id="CHEBI:58349"/>
    </ligand>
</feature>
<feature type="binding site" evidence="1">
    <location>
        <position position="259"/>
    </location>
    <ligand>
        <name>NADP(+)</name>
        <dbReference type="ChEBI" id="CHEBI:58349"/>
    </ligand>
</feature>
<evidence type="ECO:0000250" key="1">
    <source>
        <dbReference type="UniProtKB" id="L0E2Z4"/>
    </source>
</evidence>
<evidence type="ECO:0000250" key="2">
    <source>
        <dbReference type="UniProtKB" id="O93868"/>
    </source>
</evidence>
<evidence type="ECO:0000250" key="3">
    <source>
        <dbReference type="UniProtKB" id="P0CR36"/>
    </source>
</evidence>
<evidence type="ECO:0000250" key="4">
    <source>
        <dbReference type="UniProtKB" id="P38342"/>
    </source>
</evidence>
<evidence type="ECO:0000250" key="5">
    <source>
        <dbReference type="UniProtKB" id="P40471"/>
    </source>
</evidence>
<evidence type="ECO:0000255" key="6"/>
<evidence type="ECO:0000269" key="7">
    <source>
    </source>
</evidence>
<evidence type="ECO:0000303" key="8">
    <source>
    </source>
</evidence>
<evidence type="ECO:0000305" key="9"/>
<evidence type="ECO:0000312" key="10">
    <source>
        <dbReference type="EMBL" id="EAL90442.2"/>
    </source>
</evidence>
<evidence type="ECO:0000312" key="11">
    <source>
        <dbReference type="Proteomes" id="UP000002530"/>
    </source>
</evidence>
<comment type="function">
    <text evidence="7">Catalyzes the reduction of 3'-oxosphinganine (3-ketodihydrosphingosine/KDS) to sphinganine (dihydrosphingosine/DHS), the second step of de novo sphingolipid biosynthesis.</text>
</comment>
<comment type="catalytic activity">
    <reaction evidence="7">
        <text>sphinganine + NADP(+) = 3-oxosphinganine + NADPH + H(+)</text>
        <dbReference type="Rhea" id="RHEA:22640"/>
        <dbReference type="ChEBI" id="CHEBI:15378"/>
        <dbReference type="ChEBI" id="CHEBI:57783"/>
        <dbReference type="ChEBI" id="CHEBI:57817"/>
        <dbReference type="ChEBI" id="CHEBI:58299"/>
        <dbReference type="ChEBI" id="CHEBI:58349"/>
        <dbReference type="EC" id="1.1.1.102"/>
    </reaction>
    <physiologicalReaction direction="right-to-left" evidence="7">
        <dbReference type="Rhea" id="RHEA:22642"/>
    </physiologicalReaction>
</comment>
<comment type="pathway">
    <text evidence="9">Lipid metabolism; sphingolipid metabolism.</text>
</comment>
<comment type="subcellular location">
    <subcellularLocation>
        <location evidence="4">Endoplasmic reticulum membrane</location>
        <topology evidence="6">Multi-pass membrane protein</topology>
    </subcellularLocation>
</comment>
<comment type="similarity">
    <text evidence="9">Belongs to the short-chain dehydrogenases/reductases (SDR) family.</text>
</comment>
<name>KDSR_ASPFU</name>
<gene>
    <name evidence="8" type="primary">ksrA</name>
    <name evidence="10" type="ORF">AFUA_1G11150</name>
</gene>
<organism evidence="11">
    <name type="scientific">Aspergillus fumigatus (strain ATCC MYA-4609 / CBS 101355 / FGSC A1100 / Af293)</name>
    <name type="common">Neosartorya fumigata</name>
    <dbReference type="NCBI Taxonomy" id="330879"/>
    <lineage>
        <taxon>Eukaryota</taxon>
        <taxon>Fungi</taxon>
        <taxon>Dikarya</taxon>
        <taxon>Ascomycota</taxon>
        <taxon>Pezizomycotina</taxon>
        <taxon>Eurotiomycetes</taxon>
        <taxon>Eurotiomycetidae</taxon>
        <taxon>Eurotiales</taxon>
        <taxon>Aspergillaceae</taxon>
        <taxon>Aspergillus</taxon>
        <taxon>Aspergillus subgen. Fumigati</taxon>
    </lineage>
</organism>
<accession>Q4WSZ0</accession>
<sequence length="367" mass="39695">MSQIHSFIPSNASPATLGISLILCGFIVYSVSKMFGYRTNHFPVEGRTIVVTGGSDGMGKAVACQLAEKGANVVIVARTVQKLREALEAIKGTAQDVKKQRFHYISADLTDAAECERVIAEVTEWNHGLAPDVVWCCAGYCEPGFFVETPVNTLRSQMDTVYWTAANTAHATLKSWLAPIPPSQQVPLPQRHLIFTCSTLAFVSIAGYAPYSPAKAAIRSLADTLSQEIEVYNGARAASSRNAAPPADVKIHTIFPMGILSPGFDNEQGLKPQLTKELEAADKPQRPIEVAKASIQGLEKGDYLITTMFVGHMMKASALGASPRNSIITDTLTSWLSSLVFLQVIPDLRKKAFNWGLKNGVPSSQSK</sequence>
<protein>
    <recommendedName>
        <fullName evidence="9">3-ketodihydrosphingosine reductase ksrA</fullName>
        <ecNumber evidence="7">1.1.1.102</ecNumber>
    </recommendedName>
</protein>
<keyword id="KW-0256">Endoplasmic reticulum</keyword>
<keyword id="KW-0443">Lipid metabolism</keyword>
<keyword id="KW-0472">Membrane</keyword>
<keyword id="KW-0521">NADP</keyword>
<keyword id="KW-0547">Nucleotide-binding</keyword>
<keyword id="KW-0560">Oxidoreductase</keyword>
<keyword id="KW-1185">Reference proteome</keyword>
<keyword id="KW-0746">Sphingolipid metabolism</keyword>
<keyword id="KW-0812">Transmembrane</keyword>
<keyword id="KW-1133">Transmembrane helix</keyword>
<reference evidence="11" key="1">
    <citation type="journal article" date="2005" name="Nature">
        <title>Genomic sequence of the pathogenic and allergenic filamentous fungus Aspergillus fumigatus.</title>
        <authorList>
            <person name="Nierman W.C."/>
            <person name="Pain A."/>
            <person name="Anderson M.J."/>
            <person name="Wortman J.R."/>
            <person name="Kim H.S."/>
            <person name="Arroyo J."/>
            <person name="Berriman M."/>
            <person name="Abe K."/>
            <person name="Archer D.B."/>
            <person name="Bermejo C."/>
            <person name="Bennett J.W."/>
            <person name="Bowyer P."/>
            <person name="Chen D."/>
            <person name="Collins M."/>
            <person name="Coulsen R."/>
            <person name="Davies R."/>
            <person name="Dyer P.S."/>
            <person name="Farman M.L."/>
            <person name="Fedorova N."/>
            <person name="Fedorova N.D."/>
            <person name="Feldblyum T.V."/>
            <person name="Fischer R."/>
            <person name="Fosker N."/>
            <person name="Fraser A."/>
            <person name="Garcia J.L."/>
            <person name="Garcia M.J."/>
            <person name="Goble A."/>
            <person name="Goldman G.H."/>
            <person name="Gomi K."/>
            <person name="Griffith-Jones S."/>
            <person name="Gwilliam R."/>
            <person name="Haas B.J."/>
            <person name="Haas H."/>
            <person name="Harris D.E."/>
            <person name="Horiuchi H."/>
            <person name="Huang J."/>
            <person name="Humphray S."/>
            <person name="Jimenez J."/>
            <person name="Keller N."/>
            <person name="Khouri H."/>
            <person name="Kitamoto K."/>
            <person name="Kobayashi T."/>
            <person name="Konzack S."/>
            <person name="Kulkarni R."/>
            <person name="Kumagai T."/>
            <person name="Lafton A."/>
            <person name="Latge J.-P."/>
            <person name="Li W."/>
            <person name="Lord A."/>
            <person name="Lu C."/>
            <person name="Majoros W.H."/>
            <person name="May G.S."/>
            <person name="Miller B.L."/>
            <person name="Mohamoud Y."/>
            <person name="Molina M."/>
            <person name="Monod M."/>
            <person name="Mouyna I."/>
            <person name="Mulligan S."/>
            <person name="Murphy L.D."/>
            <person name="O'Neil S."/>
            <person name="Paulsen I."/>
            <person name="Penalva M.A."/>
            <person name="Pertea M."/>
            <person name="Price C."/>
            <person name="Pritchard B.L."/>
            <person name="Quail M.A."/>
            <person name="Rabbinowitsch E."/>
            <person name="Rawlins N."/>
            <person name="Rajandream M.A."/>
            <person name="Reichard U."/>
            <person name="Renauld H."/>
            <person name="Robson G.D."/>
            <person name="Rodriguez de Cordoba S."/>
            <person name="Rodriguez-Pena J.M."/>
            <person name="Ronning C.M."/>
            <person name="Rutter S."/>
            <person name="Salzberg S.L."/>
            <person name="Sanchez M."/>
            <person name="Sanchez-Ferrero J.C."/>
            <person name="Saunders D."/>
            <person name="Seeger K."/>
            <person name="Squares R."/>
            <person name="Squares S."/>
            <person name="Takeuchi M."/>
            <person name="Tekaia F."/>
            <person name="Turner G."/>
            <person name="Vazquez de Aldana C.R."/>
            <person name="Weidman J."/>
            <person name="White O."/>
            <person name="Woodward J.R."/>
            <person name="Yu J.-H."/>
            <person name="Fraser C.M."/>
            <person name="Galagan J.E."/>
            <person name="Asai K."/>
            <person name="Machida M."/>
            <person name="Hall N."/>
            <person name="Barrell B.G."/>
            <person name="Denning D.W."/>
        </authorList>
    </citation>
    <scope>NUCLEOTIDE SEQUENCE [LARGE SCALE GENOMIC DNA]</scope>
    <source>
        <strain evidence="11">ATCC MYA-4609 / CBS 101355 / FGSC A1100 / Af293</strain>
    </source>
</reference>
<reference evidence="9" key="2">
    <citation type="journal article" date="2006" name="Biochim. Biophys. Acta">
        <title>Sphingolipid biosynthesis in pathogenic fungi: identification and characterization of the 3-ketosphinganine reductase activity of Candida albicans and Aspergillus fumigatus.</title>
        <authorList>
            <person name="Fornarotto M."/>
            <person name="Xiao L."/>
            <person name="Hou Y."/>
            <person name="Koch K.A."/>
            <person name="Chang E."/>
            <person name="O'Malley R.M."/>
            <person name="Black T.A."/>
            <person name="Cable M.B."/>
            <person name="Walker S.S."/>
        </authorList>
    </citation>
    <scope>FUNCTION</scope>
    <scope>CATALYTIC ACTIVITY</scope>
</reference>
<proteinExistence type="evidence at protein level"/>
<dbReference type="EC" id="1.1.1.102" evidence="7"/>
<dbReference type="EMBL" id="AAHF01000004">
    <property type="protein sequence ID" value="EAL90442.2"/>
    <property type="molecule type" value="Genomic_DNA"/>
</dbReference>
<dbReference type="RefSeq" id="XP_752480.2">
    <property type="nucleotide sequence ID" value="XM_747387.2"/>
</dbReference>
<dbReference type="SMR" id="Q4WSZ0"/>
<dbReference type="FunCoup" id="Q4WSZ0">
    <property type="interactions" value="107"/>
</dbReference>
<dbReference type="STRING" id="330879.Q4WSZ0"/>
<dbReference type="EnsemblFungi" id="EAL90442">
    <property type="protein sequence ID" value="EAL90442"/>
    <property type="gene ID" value="AFUA_1G11150"/>
</dbReference>
<dbReference type="GeneID" id="3510362"/>
<dbReference type="KEGG" id="afm:AFUA_1G11150"/>
<dbReference type="VEuPathDB" id="FungiDB:Afu1g11150"/>
<dbReference type="eggNOG" id="KOG1210">
    <property type="taxonomic scope" value="Eukaryota"/>
</dbReference>
<dbReference type="HOGENOM" id="CLU_010194_3_0_1"/>
<dbReference type="InParanoid" id="Q4WSZ0"/>
<dbReference type="OMA" id="PRQWGFF"/>
<dbReference type="OrthoDB" id="10267115at2759"/>
<dbReference type="UniPathway" id="UPA00222"/>
<dbReference type="Proteomes" id="UP000002530">
    <property type="component" value="Chromosome 1"/>
</dbReference>
<dbReference type="GO" id="GO:0005789">
    <property type="term" value="C:endoplasmic reticulum membrane"/>
    <property type="evidence" value="ECO:0000318"/>
    <property type="project" value="GO_Central"/>
</dbReference>
<dbReference type="GO" id="GO:0047560">
    <property type="term" value="F:3-dehydrosphinganine reductase activity"/>
    <property type="evidence" value="ECO:0000314"/>
    <property type="project" value="UniProtKB"/>
</dbReference>
<dbReference type="GO" id="GO:0070402">
    <property type="term" value="F:NADPH binding"/>
    <property type="evidence" value="ECO:0000250"/>
    <property type="project" value="UniProtKB"/>
</dbReference>
<dbReference type="GO" id="GO:0006666">
    <property type="term" value="P:3-keto-sphinganine metabolic process"/>
    <property type="evidence" value="ECO:0000314"/>
    <property type="project" value="UniProtKB"/>
</dbReference>
<dbReference type="GO" id="GO:0030148">
    <property type="term" value="P:sphingolipid biosynthetic process"/>
    <property type="evidence" value="ECO:0000314"/>
    <property type="project" value="UniProtKB"/>
</dbReference>
<dbReference type="CDD" id="cd08939">
    <property type="entry name" value="KDSR-like_SDR_c"/>
    <property type="match status" value="1"/>
</dbReference>
<dbReference type="FunFam" id="3.40.50.720:FF:000456">
    <property type="entry name" value="3-ketodihydrosphingosine reductase tsc10"/>
    <property type="match status" value="1"/>
</dbReference>
<dbReference type="Gene3D" id="3.40.50.720">
    <property type="entry name" value="NAD(P)-binding Rossmann-like Domain"/>
    <property type="match status" value="1"/>
</dbReference>
<dbReference type="InterPro" id="IPR045022">
    <property type="entry name" value="KDSR-like"/>
</dbReference>
<dbReference type="InterPro" id="IPR036291">
    <property type="entry name" value="NAD(P)-bd_dom_sf"/>
</dbReference>
<dbReference type="InterPro" id="IPR002347">
    <property type="entry name" value="SDR_fam"/>
</dbReference>
<dbReference type="PANTHER" id="PTHR43550">
    <property type="entry name" value="3-KETODIHYDROSPHINGOSINE REDUCTASE"/>
    <property type="match status" value="1"/>
</dbReference>
<dbReference type="PANTHER" id="PTHR43550:SF3">
    <property type="entry name" value="3-KETODIHYDROSPHINGOSINE REDUCTASE"/>
    <property type="match status" value="1"/>
</dbReference>
<dbReference type="Pfam" id="PF00106">
    <property type="entry name" value="adh_short"/>
    <property type="match status" value="1"/>
</dbReference>
<dbReference type="PRINTS" id="PR00081">
    <property type="entry name" value="GDHRDH"/>
</dbReference>
<dbReference type="SUPFAM" id="SSF51735">
    <property type="entry name" value="NAD(P)-binding Rossmann-fold domains"/>
    <property type="match status" value="1"/>
</dbReference>